<name>PANB_SHEDO</name>
<keyword id="KW-0963">Cytoplasm</keyword>
<keyword id="KW-0460">Magnesium</keyword>
<keyword id="KW-0479">Metal-binding</keyword>
<keyword id="KW-0566">Pantothenate biosynthesis</keyword>
<keyword id="KW-1185">Reference proteome</keyword>
<keyword id="KW-0808">Transferase</keyword>
<protein>
    <recommendedName>
        <fullName evidence="1">3-methyl-2-oxobutanoate hydroxymethyltransferase</fullName>
        <ecNumber evidence="1">2.1.2.11</ecNumber>
    </recommendedName>
    <alternativeName>
        <fullName evidence="1">Ketopantoate hydroxymethyltransferase</fullName>
        <shortName evidence="1">KPHMT</shortName>
    </alternativeName>
</protein>
<feature type="chain" id="PRO_0000297368" description="3-methyl-2-oxobutanoate hydroxymethyltransferase">
    <location>
        <begin position="1"/>
        <end position="264"/>
    </location>
</feature>
<feature type="active site" description="Proton acceptor" evidence="1">
    <location>
        <position position="181"/>
    </location>
</feature>
<feature type="binding site" evidence="1">
    <location>
        <begin position="45"/>
        <end position="46"/>
    </location>
    <ligand>
        <name>3-methyl-2-oxobutanoate</name>
        <dbReference type="ChEBI" id="CHEBI:11851"/>
    </ligand>
</feature>
<feature type="binding site" evidence="1">
    <location>
        <position position="45"/>
    </location>
    <ligand>
        <name>Mg(2+)</name>
        <dbReference type="ChEBI" id="CHEBI:18420"/>
    </ligand>
</feature>
<feature type="binding site" evidence="1">
    <location>
        <position position="84"/>
    </location>
    <ligand>
        <name>3-methyl-2-oxobutanoate</name>
        <dbReference type="ChEBI" id="CHEBI:11851"/>
    </ligand>
</feature>
<feature type="binding site" evidence="1">
    <location>
        <position position="84"/>
    </location>
    <ligand>
        <name>Mg(2+)</name>
        <dbReference type="ChEBI" id="CHEBI:18420"/>
    </ligand>
</feature>
<feature type="binding site" evidence="1">
    <location>
        <position position="112"/>
    </location>
    <ligand>
        <name>3-methyl-2-oxobutanoate</name>
        <dbReference type="ChEBI" id="CHEBI:11851"/>
    </ligand>
</feature>
<feature type="binding site" evidence="1">
    <location>
        <position position="114"/>
    </location>
    <ligand>
        <name>Mg(2+)</name>
        <dbReference type="ChEBI" id="CHEBI:18420"/>
    </ligand>
</feature>
<reference key="1">
    <citation type="submission" date="2006-03" db="EMBL/GenBank/DDBJ databases">
        <title>Complete sequence of Shewanella denitrificans OS217.</title>
        <authorList>
            <consortium name="US DOE Joint Genome Institute"/>
            <person name="Copeland A."/>
            <person name="Lucas S."/>
            <person name="Lapidus A."/>
            <person name="Barry K."/>
            <person name="Detter J.C."/>
            <person name="Glavina del Rio T."/>
            <person name="Hammon N."/>
            <person name="Israni S."/>
            <person name="Dalin E."/>
            <person name="Tice H."/>
            <person name="Pitluck S."/>
            <person name="Brettin T."/>
            <person name="Bruce D."/>
            <person name="Han C."/>
            <person name="Tapia R."/>
            <person name="Gilna P."/>
            <person name="Kiss H."/>
            <person name="Schmutz J."/>
            <person name="Larimer F."/>
            <person name="Land M."/>
            <person name="Hauser L."/>
            <person name="Kyrpides N."/>
            <person name="Lykidis A."/>
            <person name="Richardson P."/>
        </authorList>
    </citation>
    <scope>NUCLEOTIDE SEQUENCE [LARGE SCALE GENOMIC DNA]</scope>
    <source>
        <strain>OS217 / ATCC BAA-1090 / DSM 15013</strain>
    </source>
</reference>
<sequence length="264" mass="28031">MSKVTSSTLLKFKQEGTKFTSITAYDASFAAAFDSEGIDAILVGDSLGMVLQGHDDTLPVTTADVAYHTACVRRGISRALLIADMPFMSYATPEQAMTNATTLMQAGANMVKLEGGHWLLETVTMLTQRGIPVCGHLGLTPQSVHVFGGFKMQGKDEKNAQRILDEALALQDAGAQLLVLECIPAALAKTITQAVAIPVIGIGAGADTDGQILVMHDVLGITSGYIPKFSKNYLKQTGEIRSAIKAYIDEVAAGDFPSEEHTLV</sequence>
<evidence type="ECO:0000255" key="1">
    <source>
        <dbReference type="HAMAP-Rule" id="MF_00156"/>
    </source>
</evidence>
<organism>
    <name type="scientific">Shewanella denitrificans (strain OS217 / ATCC BAA-1090 / DSM 15013)</name>
    <dbReference type="NCBI Taxonomy" id="318161"/>
    <lineage>
        <taxon>Bacteria</taxon>
        <taxon>Pseudomonadati</taxon>
        <taxon>Pseudomonadota</taxon>
        <taxon>Gammaproteobacteria</taxon>
        <taxon>Alteromonadales</taxon>
        <taxon>Shewanellaceae</taxon>
        <taxon>Shewanella</taxon>
    </lineage>
</organism>
<accession>Q12JC6</accession>
<gene>
    <name evidence="1" type="primary">panB</name>
    <name type="ordered locus">Sden_3174</name>
</gene>
<dbReference type="EC" id="2.1.2.11" evidence="1"/>
<dbReference type="EMBL" id="CP000302">
    <property type="protein sequence ID" value="ABE56450.1"/>
    <property type="molecule type" value="Genomic_DNA"/>
</dbReference>
<dbReference type="RefSeq" id="WP_011497595.1">
    <property type="nucleotide sequence ID" value="NC_007954.1"/>
</dbReference>
<dbReference type="SMR" id="Q12JC6"/>
<dbReference type="STRING" id="318161.Sden_3174"/>
<dbReference type="KEGG" id="sdn:Sden_3174"/>
<dbReference type="eggNOG" id="COG0413">
    <property type="taxonomic scope" value="Bacteria"/>
</dbReference>
<dbReference type="HOGENOM" id="CLU_036645_1_0_6"/>
<dbReference type="OrthoDB" id="9781789at2"/>
<dbReference type="UniPathway" id="UPA00028">
    <property type="reaction ID" value="UER00003"/>
</dbReference>
<dbReference type="Proteomes" id="UP000001982">
    <property type="component" value="Chromosome"/>
</dbReference>
<dbReference type="GO" id="GO:0005737">
    <property type="term" value="C:cytoplasm"/>
    <property type="evidence" value="ECO:0007669"/>
    <property type="project" value="UniProtKB-SubCell"/>
</dbReference>
<dbReference type="GO" id="GO:0003864">
    <property type="term" value="F:3-methyl-2-oxobutanoate hydroxymethyltransferase activity"/>
    <property type="evidence" value="ECO:0007669"/>
    <property type="project" value="UniProtKB-UniRule"/>
</dbReference>
<dbReference type="GO" id="GO:0000287">
    <property type="term" value="F:magnesium ion binding"/>
    <property type="evidence" value="ECO:0007669"/>
    <property type="project" value="TreeGrafter"/>
</dbReference>
<dbReference type="GO" id="GO:0015940">
    <property type="term" value="P:pantothenate biosynthetic process"/>
    <property type="evidence" value="ECO:0007669"/>
    <property type="project" value="UniProtKB-UniRule"/>
</dbReference>
<dbReference type="CDD" id="cd06557">
    <property type="entry name" value="KPHMT-like"/>
    <property type="match status" value="1"/>
</dbReference>
<dbReference type="FunFam" id="3.20.20.60:FF:000003">
    <property type="entry name" value="3-methyl-2-oxobutanoate hydroxymethyltransferase"/>
    <property type="match status" value="1"/>
</dbReference>
<dbReference type="Gene3D" id="3.20.20.60">
    <property type="entry name" value="Phosphoenolpyruvate-binding domains"/>
    <property type="match status" value="1"/>
</dbReference>
<dbReference type="HAMAP" id="MF_00156">
    <property type="entry name" value="PanB"/>
    <property type="match status" value="1"/>
</dbReference>
<dbReference type="InterPro" id="IPR003700">
    <property type="entry name" value="Pantoate_hydroxy_MeTrfase"/>
</dbReference>
<dbReference type="InterPro" id="IPR015813">
    <property type="entry name" value="Pyrv/PenolPyrv_kinase-like_dom"/>
</dbReference>
<dbReference type="InterPro" id="IPR040442">
    <property type="entry name" value="Pyrv_kinase-like_dom_sf"/>
</dbReference>
<dbReference type="NCBIfam" id="TIGR00222">
    <property type="entry name" value="panB"/>
    <property type="match status" value="1"/>
</dbReference>
<dbReference type="NCBIfam" id="NF001452">
    <property type="entry name" value="PRK00311.1"/>
    <property type="match status" value="1"/>
</dbReference>
<dbReference type="PANTHER" id="PTHR20881">
    <property type="entry name" value="3-METHYL-2-OXOBUTANOATE HYDROXYMETHYLTRANSFERASE"/>
    <property type="match status" value="1"/>
</dbReference>
<dbReference type="PANTHER" id="PTHR20881:SF0">
    <property type="entry name" value="3-METHYL-2-OXOBUTANOATE HYDROXYMETHYLTRANSFERASE"/>
    <property type="match status" value="1"/>
</dbReference>
<dbReference type="Pfam" id="PF02548">
    <property type="entry name" value="Pantoate_transf"/>
    <property type="match status" value="1"/>
</dbReference>
<dbReference type="PIRSF" id="PIRSF000388">
    <property type="entry name" value="Pantoate_hydroxy_MeTrfase"/>
    <property type="match status" value="1"/>
</dbReference>
<dbReference type="SUPFAM" id="SSF51621">
    <property type="entry name" value="Phosphoenolpyruvate/pyruvate domain"/>
    <property type="match status" value="1"/>
</dbReference>
<proteinExistence type="inferred from homology"/>
<comment type="function">
    <text evidence="1">Catalyzes the reversible reaction in which hydroxymethyl group from 5,10-methylenetetrahydrofolate is transferred onto alpha-ketoisovalerate to form ketopantoate.</text>
</comment>
<comment type="catalytic activity">
    <reaction evidence="1">
        <text>3-methyl-2-oxobutanoate + (6R)-5,10-methylene-5,6,7,8-tetrahydrofolate + H2O = 2-dehydropantoate + (6S)-5,6,7,8-tetrahydrofolate</text>
        <dbReference type="Rhea" id="RHEA:11824"/>
        <dbReference type="ChEBI" id="CHEBI:11561"/>
        <dbReference type="ChEBI" id="CHEBI:11851"/>
        <dbReference type="ChEBI" id="CHEBI:15377"/>
        <dbReference type="ChEBI" id="CHEBI:15636"/>
        <dbReference type="ChEBI" id="CHEBI:57453"/>
        <dbReference type="EC" id="2.1.2.11"/>
    </reaction>
</comment>
<comment type="cofactor">
    <cofactor evidence="1">
        <name>Mg(2+)</name>
        <dbReference type="ChEBI" id="CHEBI:18420"/>
    </cofactor>
    <text evidence="1">Binds 1 Mg(2+) ion per subunit.</text>
</comment>
<comment type="pathway">
    <text evidence="1">Cofactor biosynthesis; (R)-pantothenate biosynthesis; (R)-pantoate from 3-methyl-2-oxobutanoate: step 1/2.</text>
</comment>
<comment type="subunit">
    <text evidence="1">Homodecamer; pentamer of dimers.</text>
</comment>
<comment type="subcellular location">
    <subcellularLocation>
        <location evidence="1">Cytoplasm</location>
    </subcellularLocation>
</comment>
<comment type="similarity">
    <text evidence="1">Belongs to the PanB family.</text>
</comment>